<dbReference type="EC" id="1.1.1.-" evidence="2"/>
<dbReference type="EMBL" id="CU329671">
    <property type="protein sequence ID" value="CAA21910.1"/>
    <property type="molecule type" value="Genomic_DNA"/>
</dbReference>
<dbReference type="EMBL" id="X74422">
    <property type="protein sequence ID" value="CAA52443.1"/>
    <property type="status" value="ALT_INIT"/>
    <property type="molecule type" value="Genomic_DNA"/>
</dbReference>
<dbReference type="PIR" id="T39670">
    <property type="entry name" value="S35981"/>
</dbReference>
<dbReference type="RefSeq" id="NP_595120.1">
    <property type="nucleotide sequence ID" value="NM_001021027.2"/>
</dbReference>
<dbReference type="SMR" id="P36624"/>
<dbReference type="BioGRID" id="276656">
    <property type="interactions" value="1"/>
</dbReference>
<dbReference type="FunCoup" id="P36624">
    <property type="interactions" value="108"/>
</dbReference>
<dbReference type="STRING" id="284812.P36624"/>
<dbReference type="PaxDb" id="4896-SPBC1773.05c.1"/>
<dbReference type="EnsemblFungi" id="SPBC1773.05c.1">
    <property type="protein sequence ID" value="SPBC1773.05c.1:pep"/>
    <property type="gene ID" value="SPBC1773.05c"/>
</dbReference>
<dbReference type="GeneID" id="2540119"/>
<dbReference type="KEGG" id="spo:2540119"/>
<dbReference type="PomBase" id="SPBC1773.05c">
    <property type="gene designation" value="tms1"/>
</dbReference>
<dbReference type="VEuPathDB" id="FungiDB:SPBC1773.05c"/>
<dbReference type="eggNOG" id="KOG0024">
    <property type="taxonomic scope" value="Eukaryota"/>
</dbReference>
<dbReference type="HOGENOM" id="CLU_026673_11_5_1"/>
<dbReference type="InParanoid" id="P36624"/>
<dbReference type="OMA" id="FETWYAM"/>
<dbReference type="PhylomeDB" id="P36624"/>
<dbReference type="Reactome" id="R-SPO-5652227">
    <property type="pathway name" value="Fructose biosynthesis"/>
</dbReference>
<dbReference type="Reactome" id="R-SPO-5661270">
    <property type="pathway name" value="Formation of xylulose-5-phosphate"/>
</dbReference>
<dbReference type="PRO" id="PR:P36624"/>
<dbReference type="Proteomes" id="UP000002485">
    <property type="component" value="Chromosome II"/>
</dbReference>
<dbReference type="GO" id="GO:0005829">
    <property type="term" value="C:cytosol"/>
    <property type="evidence" value="ECO:0007005"/>
    <property type="project" value="PomBase"/>
</dbReference>
<dbReference type="GO" id="GO:0046526">
    <property type="term" value="F:D-xylulose reductase activity"/>
    <property type="evidence" value="ECO:0000314"/>
    <property type="project" value="PomBase"/>
</dbReference>
<dbReference type="GO" id="GO:0003939">
    <property type="term" value="F:L-iditol 2-dehydrogenase (NAD+) activity"/>
    <property type="evidence" value="ECO:0000318"/>
    <property type="project" value="GO_Central"/>
</dbReference>
<dbReference type="GO" id="GO:0008270">
    <property type="term" value="F:zinc ion binding"/>
    <property type="evidence" value="ECO:0007669"/>
    <property type="project" value="InterPro"/>
</dbReference>
<dbReference type="GO" id="GO:0006062">
    <property type="term" value="P:sorbitol catabolic process"/>
    <property type="evidence" value="ECO:0000318"/>
    <property type="project" value="GO_Central"/>
</dbReference>
<dbReference type="CDD" id="cd05285">
    <property type="entry name" value="sorbitol_DH"/>
    <property type="match status" value="1"/>
</dbReference>
<dbReference type="FunFam" id="3.40.50.720:FF:000068">
    <property type="entry name" value="Sorbitol dehydrogenase"/>
    <property type="match status" value="1"/>
</dbReference>
<dbReference type="Gene3D" id="3.90.180.10">
    <property type="entry name" value="Medium-chain alcohol dehydrogenases, catalytic domain"/>
    <property type="match status" value="1"/>
</dbReference>
<dbReference type="Gene3D" id="3.40.50.720">
    <property type="entry name" value="NAD(P)-binding Rossmann-like Domain"/>
    <property type="match status" value="1"/>
</dbReference>
<dbReference type="InterPro" id="IPR013149">
    <property type="entry name" value="ADH-like_C"/>
</dbReference>
<dbReference type="InterPro" id="IPR013154">
    <property type="entry name" value="ADH-like_N"/>
</dbReference>
<dbReference type="InterPro" id="IPR002328">
    <property type="entry name" value="ADH_Zn_CS"/>
</dbReference>
<dbReference type="InterPro" id="IPR011032">
    <property type="entry name" value="GroES-like_sf"/>
</dbReference>
<dbReference type="InterPro" id="IPR036291">
    <property type="entry name" value="NAD(P)-bd_dom_sf"/>
</dbReference>
<dbReference type="InterPro" id="IPR020843">
    <property type="entry name" value="PKS_ER"/>
</dbReference>
<dbReference type="InterPro" id="IPR045306">
    <property type="entry name" value="SDH-like"/>
</dbReference>
<dbReference type="PANTHER" id="PTHR43161">
    <property type="entry name" value="SORBITOL DEHYDROGENASE"/>
    <property type="match status" value="1"/>
</dbReference>
<dbReference type="PANTHER" id="PTHR43161:SF9">
    <property type="entry name" value="SORBITOL DEHYDROGENASE"/>
    <property type="match status" value="1"/>
</dbReference>
<dbReference type="Pfam" id="PF08240">
    <property type="entry name" value="ADH_N"/>
    <property type="match status" value="1"/>
</dbReference>
<dbReference type="Pfam" id="PF00107">
    <property type="entry name" value="ADH_zinc_N"/>
    <property type="match status" value="1"/>
</dbReference>
<dbReference type="SMART" id="SM00829">
    <property type="entry name" value="PKS_ER"/>
    <property type="match status" value="1"/>
</dbReference>
<dbReference type="SUPFAM" id="SSF50129">
    <property type="entry name" value="GroES-like"/>
    <property type="match status" value="1"/>
</dbReference>
<dbReference type="SUPFAM" id="SSF51735">
    <property type="entry name" value="NAD(P)-binding Rossmann-fold domains"/>
    <property type="match status" value="1"/>
</dbReference>
<dbReference type="PROSITE" id="PS00059">
    <property type="entry name" value="ADH_ZINC"/>
    <property type="match status" value="1"/>
</dbReference>
<proteinExistence type="inferred from homology"/>
<gene>
    <name type="primary">tms1</name>
    <name type="ORF">SPBC1773.05c</name>
</gene>
<comment type="function">
    <text evidence="2 4">Polyol dehydrogenase that catalyzes the reversible NAD(+)-dependent oxidation of various sugar alcohols. Is active with D-sorbitol (D-glucitol) as substrate, leading to the C2-oxidized product D-fructose (By similarity). Suppresses growth arrest induced by a p53 tumor mutant in fission yeast (PubMed:8223615).</text>
</comment>
<comment type="catalytic activity">
    <reaction evidence="2">
        <text>keto-D-fructose + NADH + H(+) = D-sorbitol + NAD(+)</text>
        <dbReference type="Rhea" id="RHEA:33031"/>
        <dbReference type="ChEBI" id="CHEBI:15378"/>
        <dbReference type="ChEBI" id="CHEBI:17924"/>
        <dbReference type="ChEBI" id="CHEBI:48095"/>
        <dbReference type="ChEBI" id="CHEBI:57540"/>
        <dbReference type="ChEBI" id="CHEBI:57945"/>
    </reaction>
</comment>
<comment type="cofactor">
    <cofactor evidence="3">
        <name>Zn(2+)</name>
        <dbReference type="ChEBI" id="CHEBI:29105"/>
    </cofactor>
    <text evidence="3">Binds 1 zinc ion per subunit.</text>
</comment>
<comment type="subunit">
    <text evidence="3">Homotetramer.</text>
</comment>
<comment type="similarity">
    <text evidence="5">Belongs to the zinc-containing alcohol dehydrogenase family.</text>
</comment>
<comment type="sequence caution" evidence="5">
    <conflict type="erroneous initiation">
        <sequence resource="EMBL-CDS" id="CAA52443"/>
    </conflict>
</comment>
<protein>
    <recommendedName>
        <fullName>Sorbitol dehydrogenase</fullName>
        <shortName>SDH</shortName>
        <ecNumber evidence="2">1.1.1.-</ecNumber>
    </recommendedName>
    <alternativeName>
        <fullName evidence="5">Polyol dehydrogenase</fullName>
    </alternativeName>
    <alternativeName>
        <fullName>Protein tms1</fullName>
    </alternativeName>
</protein>
<organism>
    <name type="scientific">Schizosaccharomyces pombe (strain 972 / ATCC 24843)</name>
    <name type="common">Fission yeast</name>
    <dbReference type="NCBI Taxonomy" id="284812"/>
    <lineage>
        <taxon>Eukaryota</taxon>
        <taxon>Fungi</taxon>
        <taxon>Dikarya</taxon>
        <taxon>Ascomycota</taxon>
        <taxon>Taphrinomycotina</taxon>
        <taxon>Schizosaccharomycetes</taxon>
        <taxon>Schizosaccharomycetales</taxon>
        <taxon>Schizosaccharomycetaceae</taxon>
        <taxon>Schizosaccharomyces</taxon>
    </lineage>
</organism>
<keyword id="KW-0479">Metal-binding</keyword>
<keyword id="KW-0520">NAD</keyword>
<keyword id="KW-0560">Oxidoreductase</keyword>
<keyword id="KW-1185">Reference proteome</keyword>
<keyword id="KW-0862">Zinc</keyword>
<reference key="1">
    <citation type="journal article" date="2002" name="Nature">
        <title>The genome sequence of Schizosaccharomyces pombe.</title>
        <authorList>
            <person name="Wood V."/>
            <person name="Gwilliam R."/>
            <person name="Rajandream M.A."/>
            <person name="Lyne M.H."/>
            <person name="Lyne R."/>
            <person name="Stewart A."/>
            <person name="Sgouros J.G."/>
            <person name="Peat N."/>
            <person name="Hayles J."/>
            <person name="Baker S.G."/>
            <person name="Basham D."/>
            <person name="Bowman S."/>
            <person name="Brooks K."/>
            <person name="Brown D."/>
            <person name="Brown S."/>
            <person name="Chillingworth T."/>
            <person name="Churcher C.M."/>
            <person name="Collins M."/>
            <person name="Connor R."/>
            <person name="Cronin A."/>
            <person name="Davis P."/>
            <person name="Feltwell T."/>
            <person name="Fraser A."/>
            <person name="Gentles S."/>
            <person name="Goble A."/>
            <person name="Hamlin N."/>
            <person name="Harris D.E."/>
            <person name="Hidalgo J."/>
            <person name="Hodgson G."/>
            <person name="Holroyd S."/>
            <person name="Hornsby T."/>
            <person name="Howarth S."/>
            <person name="Huckle E.J."/>
            <person name="Hunt S."/>
            <person name="Jagels K."/>
            <person name="James K.D."/>
            <person name="Jones L."/>
            <person name="Jones M."/>
            <person name="Leather S."/>
            <person name="McDonald S."/>
            <person name="McLean J."/>
            <person name="Mooney P."/>
            <person name="Moule S."/>
            <person name="Mungall K.L."/>
            <person name="Murphy L.D."/>
            <person name="Niblett D."/>
            <person name="Odell C."/>
            <person name="Oliver K."/>
            <person name="O'Neil S."/>
            <person name="Pearson D."/>
            <person name="Quail M.A."/>
            <person name="Rabbinowitsch E."/>
            <person name="Rutherford K.M."/>
            <person name="Rutter S."/>
            <person name="Saunders D."/>
            <person name="Seeger K."/>
            <person name="Sharp S."/>
            <person name="Skelton J."/>
            <person name="Simmonds M.N."/>
            <person name="Squares R."/>
            <person name="Squares S."/>
            <person name="Stevens K."/>
            <person name="Taylor K."/>
            <person name="Taylor R.G."/>
            <person name="Tivey A."/>
            <person name="Walsh S.V."/>
            <person name="Warren T."/>
            <person name="Whitehead S."/>
            <person name="Woodward J.R."/>
            <person name="Volckaert G."/>
            <person name="Aert R."/>
            <person name="Robben J."/>
            <person name="Grymonprez B."/>
            <person name="Weltjens I."/>
            <person name="Vanstreels E."/>
            <person name="Rieger M."/>
            <person name="Schaefer M."/>
            <person name="Mueller-Auer S."/>
            <person name="Gabel C."/>
            <person name="Fuchs M."/>
            <person name="Duesterhoeft A."/>
            <person name="Fritzc C."/>
            <person name="Holzer E."/>
            <person name="Moestl D."/>
            <person name="Hilbert H."/>
            <person name="Borzym K."/>
            <person name="Langer I."/>
            <person name="Beck A."/>
            <person name="Lehrach H."/>
            <person name="Reinhardt R."/>
            <person name="Pohl T.M."/>
            <person name="Eger P."/>
            <person name="Zimmermann W."/>
            <person name="Wedler H."/>
            <person name="Wambutt R."/>
            <person name="Purnelle B."/>
            <person name="Goffeau A."/>
            <person name="Cadieu E."/>
            <person name="Dreano S."/>
            <person name="Gloux S."/>
            <person name="Lelaure V."/>
            <person name="Mottier S."/>
            <person name="Galibert F."/>
            <person name="Aves S.J."/>
            <person name="Xiang Z."/>
            <person name="Hunt C."/>
            <person name="Moore K."/>
            <person name="Hurst S.M."/>
            <person name="Lucas M."/>
            <person name="Rochet M."/>
            <person name="Gaillardin C."/>
            <person name="Tallada V.A."/>
            <person name="Garzon A."/>
            <person name="Thode G."/>
            <person name="Daga R.R."/>
            <person name="Cruzado L."/>
            <person name="Jimenez J."/>
            <person name="Sanchez M."/>
            <person name="del Rey F."/>
            <person name="Benito J."/>
            <person name="Dominguez A."/>
            <person name="Revuelta J.L."/>
            <person name="Moreno S."/>
            <person name="Armstrong J."/>
            <person name="Forsburg S.L."/>
            <person name="Cerutti L."/>
            <person name="Lowe T."/>
            <person name="McCombie W.R."/>
            <person name="Paulsen I."/>
            <person name="Potashkin J."/>
            <person name="Shpakovski G.V."/>
            <person name="Ussery D."/>
            <person name="Barrell B.G."/>
            <person name="Nurse P."/>
        </authorList>
    </citation>
    <scope>NUCLEOTIDE SEQUENCE [LARGE SCALE GENOMIC DNA]</scope>
    <source>
        <strain>972 / ATCC 24843</strain>
    </source>
</reference>
<reference key="2">
    <citation type="journal article" date="1993" name="Eur. J. Biochem.">
        <title>Putative dehydrogenase tms1 suppresses growth arrest induced by a p53 tumour mutant in fission yeast.</title>
        <authorList>
            <person name="Wagner P."/>
            <person name="Grimaldi M."/>
            <person name="Jenkins J.R."/>
        </authorList>
    </citation>
    <scope>NUCLEOTIDE SEQUENCE [GENOMIC DNA] OF 5-360</scope>
    <scope>FUNCTION</scope>
    <source>
        <strain>972 / ATCC 24843</strain>
    </source>
</reference>
<sequence>MAPAEKAFVLRKKMDTAIEDRPGQTLTDDHQVKVAIKATGICGSDVHYWKEGGIGDFILKKPMILGHESAGVVVEVGKGVSSLKPGDPVAVEPGCVCRLCDYCRSGRYNLCPHMEFAATPPYDGTLRTYYITTEDFCTKLPKQISVEEGALFEPMSVAVHAMTRGNLKCGSRVLVMGCGTVGLLMMAVAKAYGAIDIVAVDASPSRVEFAQKYVGAKPFTPIAAKENESLPDYAQRYKQAIIEKYGEFDFAVDATGVGICIHTAVLALKRGGTFVQAGNGKPVIDFPINHIINYEINVLGSFRYAHGCYKQSLFLVSNGLVDVKPLITHRFAFKDALKAYETVASGEEGVLKVIIGGPDA</sequence>
<name>DHSO_SCHPO</name>
<feature type="chain" id="PRO_0000160823" description="Sorbitol dehydrogenase">
    <location>
        <begin position="1"/>
        <end position="360"/>
    </location>
</feature>
<feature type="binding site" evidence="3">
    <location>
        <position position="42"/>
    </location>
    <ligand>
        <name>Zn(2+)</name>
        <dbReference type="ChEBI" id="CHEBI:29105"/>
        <note>catalytic</note>
    </ligand>
</feature>
<feature type="binding site" evidence="1">
    <location>
        <position position="48"/>
    </location>
    <ligand>
        <name>substrate</name>
    </ligand>
</feature>
<feature type="binding site" evidence="3">
    <location>
        <position position="67"/>
    </location>
    <ligand>
        <name>Zn(2+)</name>
        <dbReference type="ChEBI" id="CHEBI:29105"/>
        <note>catalytic</note>
    </ligand>
</feature>
<feature type="binding site" evidence="3">
    <location>
        <position position="68"/>
    </location>
    <ligand>
        <name>Zn(2+)</name>
        <dbReference type="ChEBI" id="CHEBI:29105"/>
        <note>catalytic</note>
    </ligand>
</feature>
<feature type="binding site" evidence="1">
    <location>
        <position position="153"/>
    </location>
    <ligand>
        <name>substrate</name>
    </ligand>
</feature>
<feature type="binding site" evidence="3">
    <location>
        <position position="201"/>
    </location>
    <ligand>
        <name>NAD(+)</name>
        <dbReference type="ChEBI" id="CHEBI:57540"/>
    </ligand>
</feature>
<feature type="binding site" evidence="3">
    <location>
        <position position="206"/>
    </location>
    <ligand>
        <name>NAD(+)</name>
        <dbReference type="ChEBI" id="CHEBI:57540"/>
    </ligand>
</feature>
<feature type="binding site" evidence="3">
    <location>
        <begin position="277"/>
        <end position="279"/>
    </location>
    <ligand>
        <name>NAD(+)</name>
        <dbReference type="ChEBI" id="CHEBI:57540"/>
    </ligand>
</feature>
<feature type="binding site" evidence="3">
    <location>
        <begin position="301"/>
        <end position="303"/>
    </location>
    <ligand>
        <name>NAD(+)</name>
        <dbReference type="ChEBI" id="CHEBI:57540"/>
    </ligand>
</feature>
<feature type="binding site" evidence="1">
    <location>
        <position position="303"/>
    </location>
    <ligand>
        <name>substrate</name>
    </ligand>
</feature>
<feature type="binding site" evidence="1">
    <location>
        <position position="304"/>
    </location>
    <ligand>
        <name>substrate</name>
    </ligand>
</feature>
<evidence type="ECO:0000250" key="1">
    <source>
        <dbReference type="UniProtKB" id="P07846"/>
    </source>
</evidence>
<evidence type="ECO:0000250" key="2">
    <source>
        <dbReference type="UniProtKB" id="P35497"/>
    </source>
</evidence>
<evidence type="ECO:0000250" key="3">
    <source>
        <dbReference type="UniProtKB" id="Q00796"/>
    </source>
</evidence>
<evidence type="ECO:0000269" key="4">
    <source>
    </source>
</evidence>
<evidence type="ECO:0000305" key="5"/>
<accession>P36624</accession>